<name>MMDB_VEIPA</name>
<organism>
    <name type="scientific">Veillonella parvula</name>
    <name type="common">Staphylococcus parvulus</name>
    <dbReference type="NCBI Taxonomy" id="29466"/>
    <lineage>
        <taxon>Bacteria</taxon>
        <taxon>Bacillati</taxon>
        <taxon>Bacillota</taxon>
        <taxon>Negativicutes</taxon>
        <taxon>Veillonellales</taxon>
        <taxon>Veillonellaceae</taxon>
        <taxon>Veillonella</taxon>
    </lineage>
</organism>
<feature type="chain" id="PRO_0000453537" description="Methylmalonyl-CoA decarboxylase subunit beta">
    <location>
        <begin position="1"/>
        <end position="373"/>
    </location>
</feature>
<feature type="transmembrane region" description="Helical" evidence="1">
    <location>
        <begin position="17"/>
        <end position="37"/>
    </location>
</feature>
<feature type="transmembrane region" description="Helical" evidence="1">
    <location>
        <begin position="38"/>
        <end position="58"/>
    </location>
</feature>
<feature type="transmembrane region" description="Helical" evidence="1">
    <location>
        <begin position="81"/>
        <end position="101"/>
    </location>
</feature>
<feature type="transmembrane region" description="Helical" evidence="1">
    <location>
        <begin position="106"/>
        <end position="126"/>
    </location>
</feature>
<feature type="transmembrane region" description="Helical" evidence="1">
    <location>
        <begin position="132"/>
        <end position="152"/>
    </location>
</feature>
<feature type="transmembrane region" description="Helical" evidence="1">
    <location>
        <begin position="156"/>
        <end position="176"/>
    </location>
</feature>
<feature type="transmembrane region" description="Helical" evidence="1">
    <location>
        <begin position="206"/>
        <end position="226"/>
    </location>
</feature>
<feature type="transmembrane region" description="Helical" evidence="1">
    <location>
        <begin position="257"/>
        <end position="277"/>
    </location>
</feature>
<feature type="transmembrane region" description="Helical" evidence="1">
    <location>
        <begin position="280"/>
        <end position="300"/>
    </location>
</feature>
<feature type="transmembrane region" description="Helical" evidence="1">
    <location>
        <begin position="343"/>
        <end position="363"/>
    </location>
</feature>
<comment type="function">
    <text evidence="2 3 4 6 7 8">Tunnel subunit of the sodium ion pump methylmalonyl-CoA decarboxylase, which converts the chemical energy of a decarboxylation reaction into an electrochemical gradient of Na(+) ions across the cytoplasmic membrane, thereby creating a sodium ion motive force that is used for ATP synthesis. The beta subunit catalyzes the decarboxylation of the carboxybiotin carrier protein and the coupled export of Na(+) ions (PubMed:1991479, PubMed:2920730, PubMed:3609308, PubMed:6852015, PubMed:7070502, PubMed:7601825). Can also convert malonyl-CoA into acetyl-CoA (PubMed:2920730, PubMed:6852015).</text>
</comment>
<comment type="catalytic activity">
    <reaction evidence="3 6 8">
        <text>(S)-methylmalonyl-CoA + Na(+)(in) + H(+)(out) = propanoyl-CoA + Na(+)(out) + CO2</text>
        <dbReference type="Rhea" id="RHEA:21396"/>
        <dbReference type="ChEBI" id="CHEBI:15378"/>
        <dbReference type="ChEBI" id="CHEBI:16526"/>
        <dbReference type="ChEBI" id="CHEBI:29101"/>
        <dbReference type="ChEBI" id="CHEBI:57327"/>
        <dbReference type="ChEBI" id="CHEBI:57392"/>
        <dbReference type="EC" id="7.2.4.3"/>
    </reaction>
</comment>
<comment type="activity regulation">
    <text evidence="6 8">Completely inhibited by avidin.</text>
</comment>
<comment type="biophysicochemical properties">
    <kinetics>
        <KM evidence="6">7 uM for (S)-methylmalonyl-CoA</KM>
        <KM evidence="6">35 uM for malonyl-CoA</KM>
        <KM evidence="6">0.6 mM for Na(+)</KM>
    </kinetics>
    <phDependence>
        <text evidence="6">Optimum pH is 6.4-7.0.</text>
    </phDependence>
</comment>
<comment type="subunit">
    <text evidence="8 9">The methylmalonyl-CoA decarboxylase is composed of five subunits: the carboxyltransferase alpha subunit (MmdA), the tunnel beta subunit (MmdB), the biotin-containing gamma subunit (MmdC), and the delta (MmdD) and epsilon (MmdE) subunits.</text>
</comment>
<comment type="subcellular location">
    <subcellularLocation>
        <location evidence="5 6 7 10">Cell membrane</location>
        <topology evidence="1">Multi-pass membrane protein</topology>
    </subcellularLocation>
</comment>
<comment type="PTM">
    <text evidence="9">The N-terminus is blocked.</text>
</comment>
<comment type="similarity">
    <text evidence="12">Belongs to the GcdB/MmdB/OadB family.</text>
</comment>
<protein>
    <recommendedName>
        <fullName evidence="12">Methylmalonyl-CoA decarboxylase subunit beta</fullName>
        <ecNumber evidence="3 6 8">7.2.4.3</ecNumber>
    </recommendedName>
</protein>
<gene>
    <name evidence="11" type="primary">mmdB</name>
</gene>
<evidence type="ECO:0000255" key="1"/>
<evidence type="ECO:0000269" key="2">
    <source>
    </source>
</evidence>
<evidence type="ECO:0000269" key="3">
    <source>
    </source>
</evidence>
<evidence type="ECO:0000269" key="4">
    <source>
    </source>
</evidence>
<evidence type="ECO:0000269" key="5">
    <source>
    </source>
</evidence>
<evidence type="ECO:0000269" key="6">
    <source>
    </source>
</evidence>
<evidence type="ECO:0000269" key="7">
    <source>
    </source>
</evidence>
<evidence type="ECO:0000269" key="8">
    <source>
    </source>
</evidence>
<evidence type="ECO:0000269" key="9">
    <source>
    </source>
</evidence>
<evidence type="ECO:0000269" key="10">
    <source ref="5"/>
</evidence>
<evidence type="ECO:0000303" key="11">
    <source>
    </source>
</evidence>
<evidence type="ECO:0000305" key="12"/>
<dbReference type="EC" id="7.2.4.3" evidence="3 6 8"/>
<dbReference type="EMBL" id="L22208">
    <property type="protein sequence ID" value="AAC36824.1"/>
    <property type="molecule type" value="Unassigned_DNA"/>
</dbReference>
<dbReference type="EMBL" id="Z24754">
    <property type="protein sequence ID" value="CAA80876.1"/>
    <property type="molecule type" value="Genomic_DNA"/>
</dbReference>
<dbReference type="PIR" id="E49094">
    <property type="entry name" value="E49094"/>
</dbReference>
<dbReference type="RefSeq" id="WP_004696480.1">
    <property type="nucleotide sequence ID" value="NZ_CAJJJA010000001.1"/>
</dbReference>
<dbReference type="SMR" id="Q57286"/>
<dbReference type="TCDB" id="3.B.1.1.2">
    <property type="family name" value="the na(+)-transporting carboxylic acid decarboxylase (nat-dc) family"/>
</dbReference>
<dbReference type="GeneID" id="69653795"/>
<dbReference type="OMA" id="YMALIPL"/>
<dbReference type="BioCyc" id="MetaCyc:MONOMER-21718"/>
<dbReference type="GO" id="GO:0005886">
    <property type="term" value="C:plasma membrane"/>
    <property type="evidence" value="ECO:0007669"/>
    <property type="project" value="UniProtKB-SubCell"/>
</dbReference>
<dbReference type="GO" id="GO:0018801">
    <property type="term" value="F:glutaconyl-CoA decarboxylase activity"/>
    <property type="evidence" value="ECO:0007669"/>
    <property type="project" value="UniProtKB-EC"/>
</dbReference>
<dbReference type="GO" id="GO:0006814">
    <property type="term" value="P:sodium ion transport"/>
    <property type="evidence" value="ECO:0007669"/>
    <property type="project" value="UniProtKB-KW"/>
</dbReference>
<dbReference type="InterPro" id="IPR005661">
    <property type="entry name" value="OadB_MmdB"/>
</dbReference>
<dbReference type="NCBIfam" id="TIGR01109">
    <property type="entry name" value="Na_pump_decarbB"/>
    <property type="match status" value="1"/>
</dbReference>
<dbReference type="PANTHER" id="PTHR35806">
    <property type="entry name" value="OXALOACETATE DECARBOXYLASE BETA CHAIN 2"/>
    <property type="match status" value="1"/>
</dbReference>
<dbReference type="PANTHER" id="PTHR35806:SF1">
    <property type="entry name" value="OXALOACETATE DECARBOXYLASE BETA CHAIN 2"/>
    <property type="match status" value="1"/>
</dbReference>
<dbReference type="Pfam" id="PF03977">
    <property type="entry name" value="OAD_beta"/>
    <property type="match status" value="1"/>
</dbReference>
<dbReference type="PIRSF" id="PIRSF015658">
    <property type="entry name" value="MmdB_OadB"/>
    <property type="match status" value="1"/>
</dbReference>
<keyword id="KW-1003">Cell membrane</keyword>
<keyword id="KW-0406">Ion transport</keyword>
<keyword id="KW-0472">Membrane</keyword>
<keyword id="KW-0915">Sodium</keyword>
<keyword id="KW-0739">Sodium transport</keyword>
<keyword id="KW-1278">Translocase</keyword>
<keyword id="KW-0812">Transmembrane</keyword>
<keyword id="KW-1133">Transmembrane helix</keyword>
<keyword id="KW-0813">Transport</keyword>
<proteinExistence type="evidence at protein level"/>
<sequence>MEAFAVAIQSVINDSGFLAFTTGNAIMILVGLILLYLAFAREFEPLLLGPIAFGCLLANIPRNGFEEGVMALISAGISQEIFPPLIFLGVGAMTDFGPLIANPKTLLLGAAAQIGVFAALGGAMMLGFTAQEAAAIGIIGGADGPTSIYLATKLAPHLLGAIAVAAYSYMSLVPLIQPPVMKLFTTQKEREIVMEQLREVTRFEKIVFPIVATIFISLLLPSITSLLGMLMLGNLFRESGVTDRLSDTSQNALINTVTIFLATGTGLTMSAEHFLSLETIKIILLGLFAFICGTAGGVLFGKLMSLVDGGKTNPLIGSAGVSAVPMAARVSQVVGAKANPANFLLMHAMGPNVAGVIGTAVAAGTMLAMLSNH</sequence>
<accession>Q57286</accession>
<reference key="1">
    <citation type="journal article" date="1993" name="J. Biol. Chem.">
        <title>Sequence of the sodium ion pump methylmalonyl-CoA decarboxylase from Veillonella parvula.</title>
        <authorList>
            <person name="Huder J.B."/>
            <person name="Dimroth P."/>
        </authorList>
    </citation>
    <scope>NUCLEOTIDE SEQUENCE [GENOMIC DNA]</scope>
    <scope>SUBUNIT</scope>
</reference>
<reference key="2">
    <citation type="journal article" date="1982" name="Nature">
        <title>Conversion of the chemical energy of methylmalonyl-CoA decarboxylation into a Na+ gradient.</title>
        <authorList>
            <person name="Hilpert W."/>
            <person name="Dimroth P."/>
        </authorList>
    </citation>
    <scope>FUNCTION</scope>
    <scope>SUBCELLULAR LOCATION</scope>
</reference>
<reference key="3">
    <citation type="journal article" date="1983" name="Eur. J. Biochem.">
        <title>Purification and characterization of a new sodium-transport decarboxylase. Methylmalonyl-CoA decarboxylase from Veillonella alcalescens.</title>
        <authorList>
            <person name="Hilpert W."/>
            <person name="Dimroth P."/>
        </authorList>
    </citation>
    <scope>FUNCTION</scope>
    <scope>CATALYTIC ACTIVITY</scope>
    <scope>ACTIVITY REGULATION</scope>
    <scope>BIOPHYSICOCHEMICAL PROPERTIES</scope>
    <scope>SUBCELLULAR LOCATION</scope>
    <source>
        <strain>ATCC 17745</strain>
    </source>
</reference>
<reference key="4">
    <citation type="journal article" date="1984" name="Eur. J. Biochem.">
        <title>Reconstitution of Na+ transport from purified methylmalonyl-CoA decarboxylase and phospholipid vesicles.</title>
        <authorList>
            <person name="Hilpert W."/>
            <person name="Dimroth P."/>
        </authorList>
    </citation>
    <scope>SUBCELLULAR LOCATION</scope>
    <source>
        <strain>ATCC 17745</strain>
    </source>
</reference>
<reference key="5">
    <citation type="journal article" date="1986" name="FEBS Lett.">
        <title>Morphological properties of proteoliposomes reconstituted with the Na+ pump methylmalonyl-CoA decarboxylase from Veillonella alcalescens.</title>
        <authorList>
            <person name="Rohde M."/>
            <person name="Dakena P."/>
            <person name="Mayer F."/>
            <person name="Dimroth P."/>
        </authorList>
    </citation>
    <scope>SUBCELLULAR LOCATION</scope>
</reference>
<reference key="6">
    <citation type="journal article" date="1987" name="FEBS Lett.">
        <title>Stereochemistry of the methylmalonyl-CoA decarboxylation reaction.</title>
        <authorList>
            <person name="Hoffmann A."/>
            <person name="Dimroth P."/>
        </authorList>
    </citation>
    <scope>FUNCTION</scope>
</reference>
<reference key="7">
    <citation type="journal article" date="1989" name="Eur. J. Biochem.">
        <title>The carboxyltransferase activity of the sodium-ion-translocating methylmalonyl-CoA decarboxylase of Veillonella alcalescens.</title>
        <authorList>
            <person name="Hoffmann A."/>
            <person name="Hilpert W."/>
            <person name="Dimroth P."/>
        </authorList>
    </citation>
    <scope>FUNCTION</scope>
    <scope>CATALYTIC ACTIVITY</scope>
    <source>
        <strain>ATCC 17745</strain>
    </source>
</reference>
<reference key="8">
    <citation type="journal article" date="1991" name="Eur. J. Biochem.">
        <title>On the mechanism of sodium ion translocation by methylmalonyl-CoA decarboxylase from Veillonella alcalescens.</title>
        <authorList>
            <person name="Hilpert W."/>
            <person name="Dimroth P."/>
        </authorList>
    </citation>
    <scope>FUNCTION</scope>
    <source>
        <strain>ATCC 17745</strain>
    </source>
</reference>
<reference key="9">
    <citation type="journal article" date="1995" name="J. Bacteriol.">
        <title>Expression of the sodium ion pump methylmalonyl-coenzyme A-decarboxylase from Veillonella parvula and of mutated enzyme specimens in Escherichia coli.</title>
        <authorList>
            <person name="Huder J.B."/>
            <person name="Dimroth P."/>
        </authorList>
    </citation>
    <scope>FUNCTION</scope>
    <scope>CATALYTIC ACTIVITY</scope>
    <scope>ACTIVITY REGULATION</scope>
    <scope>SUBUNIT</scope>
</reference>